<keyword id="KW-0027">Amidation</keyword>
<keyword id="KW-0165">Cleavage on pair of basic residues</keyword>
<keyword id="KW-0528">Neurotoxin</keyword>
<keyword id="KW-0964">Secreted</keyword>
<keyword id="KW-0732">Signal</keyword>
<keyword id="KW-0800">Toxin</keyword>
<feature type="signal peptide" evidence="2">
    <location>
        <begin position="1"/>
        <end position="19"/>
    </location>
</feature>
<feature type="propeptide" id="PRO_0000404993" evidence="2">
    <location>
        <begin position="20"/>
        <end position="43"/>
    </location>
</feature>
<feature type="peptide" id="PRO_0000404994" description="Conotoxin VnMLCL-041" evidence="2">
    <location>
        <begin position="46"/>
        <end position="64"/>
    </location>
</feature>
<feature type="modified residue" description="Lysine amide" evidence="1">
    <location>
        <position position="64"/>
    </location>
</feature>
<sequence>MLCLPVFIILLLLASPAAPNPLQTRIQSNLIRAGPEDANIKTDKRVIISGLLASILVPLIDAIKG</sequence>
<organism>
    <name type="scientific">Conus ventricosus</name>
    <name type="common">Mediterranean cone</name>
    <dbReference type="NCBI Taxonomy" id="117992"/>
    <lineage>
        <taxon>Eukaryota</taxon>
        <taxon>Metazoa</taxon>
        <taxon>Spiralia</taxon>
        <taxon>Lophotrochozoa</taxon>
        <taxon>Mollusca</taxon>
        <taxon>Gastropoda</taxon>
        <taxon>Caenogastropoda</taxon>
        <taxon>Neogastropoda</taxon>
        <taxon>Conoidea</taxon>
        <taxon>Conidae</taxon>
        <taxon>Conus</taxon>
        <taxon>Lautoconus</taxon>
    </lineage>
</organism>
<reference key="1">
    <citation type="journal article" date="2001" name="Mol. Biol. Evol.">
        <title>Mechanisms for evolving hypervariability: the case of conopeptides.</title>
        <authorList>
            <person name="Conticello S.G."/>
            <person name="Gilad Y."/>
            <person name="Avidan N."/>
            <person name="Ben-Asher E."/>
            <person name="Levy Z."/>
            <person name="Fainzilber M."/>
        </authorList>
    </citation>
    <scope>NUCLEOTIDE SEQUENCE [MRNA]</scope>
    <source>
        <tissue>Venom duct</tissue>
    </source>
</reference>
<dbReference type="EMBL" id="AF214998">
    <property type="protein sequence ID" value="AAG60426.1"/>
    <property type="molecule type" value="mRNA"/>
</dbReference>
<dbReference type="ConoServer" id="685">
    <property type="toxin name" value="VnMLCL-041 precursor"/>
</dbReference>
<dbReference type="GO" id="GO:0005576">
    <property type="term" value="C:extracellular region"/>
    <property type="evidence" value="ECO:0007669"/>
    <property type="project" value="UniProtKB-SubCell"/>
</dbReference>
<dbReference type="GO" id="GO:0090729">
    <property type="term" value="F:toxin activity"/>
    <property type="evidence" value="ECO:0007669"/>
    <property type="project" value="UniProtKB-KW"/>
</dbReference>
<name>CT0C6_CONVE</name>
<evidence type="ECO:0000250" key="1"/>
<evidence type="ECO:0000255" key="2"/>
<evidence type="ECO:0000305" key="3"/>
<comment type="subcellular location">
    <subcellularLocation>
        <location evidence="1">Secreted</location>
    </subcellularLocation>
</comment>
<comment type="tissue specificity">
    <text>Expressed by the venom duct.</text>
</comment>
<comment type="miscellaneous">
    <text>The mature peptide does not contain cysteine residue.</text>
</comment>
<comment type="similarity">
    <text evidence="3">Belongs to the conotoxin T superfamily.</text>
</comment>
<proteinExistence type="evidence at transcript level"/>
<accession>Q9BPD6</accession>
<protein>
    <recommendedName>
        <fullName>Conotoxin VnMLCL-041</fullName>
    </recommendedName>
</protein>